<reference key="1">
    <citation type="submission" date="2005-06" db="EMBL/GenBank/DDBJ databases">
        <title>DNA sequences of macaque genes expressed in brain or testis and its evolutionary implications.</title>
        <authorList>
            <consortium name="International consortium for macaque cDNA sequencing and analysis"/>
        </authorList>
    </citation>
    <scope>NUCLEOTIDE SEQUENCE [LARGE SCALE MRNA]</scope>
    <source>
        <tissue>Testis</tissue>
    </source>
</reference>
<proteinExistence type="evidence at transcript level"/>
<comment type="function">
    <text evidence="1">Component of the intraflagellar transport (IFT) complex B required for transport of proteins in the motile cilium. Required for transport of specific ciliary cargo proteins related to motility, while it is neither required for IFT complex B assembly or motion nor for cilium assembly. Required for efficient coupling between the accumulation of GLI2 and GLI3 at the ciliary tips and their dissociation from the negative regulator SUFU. Plays a key role in maintaining the integrity of the IFT complex B and the proper ciliary localization of the IFT complex B components. Not required for IFT complex A ciliary localization or function. Essential for maintaining proper microtubule organization within the ciliary axoneme.</text>
</comment>
<comment type="subunit">
    <text evidence="1">Component of the IFT complex B. Interacts with IFT46; the interaction is direct.</text>
</comment>
<comment type="subcellular location">
    <subcellularLocation>
        <location evidence="1">Cell projection</location>
        <location evidence="1">Cilium</location>
    </subcellularLocation>
    <text evidence="1">Localizes at the base to the ciliary transition zone.</text>
</comment>
<comment type="similarity">
    <text evidence="3">Belongs to the IFT56 family.</text>
</comment>
<gene>
    <name type="primary">IFT56</name>
    <name type="synonym">TTC26</name>
    <name type="ORF">QtsA-13939</name>
    <name type="ORF">QtsA-17174</name>
</gene>
<name>IFT56_MACFA</name>
<keyword id="KW-0966">Cell projection</keyword>
<keyword id="KW-0969">Cilium</keyword>
<keyword id="KW-0653">Protein transport</keyword>
<keyword id="KW-1185">Reference proteome</keyword>
<keyword id="KW-0677">Repeat</keyword>
<keyword id="KW-0802">TPR repeat</keyword>
<keyword id="KW-0813">Transport</keyword>
<accession>Q4R7Z9</accession>
<accession>Q4R6T1</accession>
<sequence>MMLSRAKPAVGRGVQPTDKKKKKGRKIPKLEELLSKRDFTGAITLLEFKRHVGEEEEDTNLWIGYCAFHLGDYKRALEEYENATKEENCNSEVWVNLACTYFFLGMYKQAEAAGFKASKSRLQNRLLFHLAHKFNDEKKLMSFHQNLQDVTEDQLSLASIHYMRSHYQEAIDIYKRILLDNREYLALNVYVALCYYKLDYYDVSQEVLAVYLQQIPDSTIALNLKACNHFRLYNGRAAEAELKSLMDNASSSFEFAKELIRHNLVVFRGGEGALQVLPPLVDVIPEARLNLVIYYLRQDDVQEAYNLIKDLEPTTPQEYILKGVVNAALGQEMGSRDHMKIAQQFFQLVGGSASECDTIPGRQCMASCFFLLKQFDDVLIYLNSFKSYFYNDDIFNFNYAQAKAATGNTSEGEEAFLLIQSEKMKNDYIYLSWLARCYIMNKKPRLAWELYLKMETSGESFSLLQLIANDCYKMGQFYYSAKAFDVLERLDPNPEYWEGKRGACVGIFQMIVAGREPKETLREVLHLLRSTGNTQVEYMIRIMKKWAKENRVPI</sequence>
<feature type="chain" id="PRO_0000289083" description="Intraflagellar transport protein 56">
    <location>
        <begin position="1"/>
        <end position="554"/>
    </location>
</feature>
<feature type="repeat" description="TPR 1">
    <location>
        <begin position="57"/>
        <end position="90"/>
    </location>
</feature>
<feature type="repeat" description="TPR 2">
    <location>
        <begin position="92"/>
        <end position="125"/>
    </location>
</feature>
<feature type="repeat" description="TPR 3">
    <location>
        <begin position="151"/>
        <end position="184"/>
    </location>
</feature>
<feature type="repeat" description="TPR 4">
    <location>
        <begin position="468"/>
        <end position="501"/>
    </location>
</feature>
<feature type="region of interest" description="Disordered" evidence="2">
    <location>
        <begin position="1"/>
        <end position="26"/>
    </location>
</feature>
<feature type="sequence conflict" description="In Ref. 1; BAE01193." evidence="3" ref="1">
    <original>H</original>
    <variation>N</variation>
    <location>
        <position position="161"/>
    </location>
</feature>
<feature type="sequence conflict" description="In Ref. 1; BAE01193." evidence="3" ref="1">
    <original>I</original>
    <variation>T</variation>
    <location>
        <position position="308"/>
    </location>
</feature>
<evidence type="ECO:0000250" key="1">
    <source>
        <dbReference type="UniProtKB" id="Q8BS45"/>
    </source>
</evidence>
<evidence type="ECO:0000256" key="2">
    <source>
        <dbReference type="SAM" id="MobiDB-lite"/>
    </source>
</evidence>
<evidence type="ECO:0000305" key="3"/>
<dbReference type="EMBL" id="AB168662">
    <property type="protein sequence ID" value="BAE00773.1"/>
    <property type="molecule type" value="mRNA"/>
</dbReference>
<dbReference type="EMBL" id="AB169099">
    <property type="protein sequence ID" value="BAE01193.1"/>
    <property type="molecule type" value="mRNA"/>
</dbReference>
<dbReference type="RefSeq" id="NP_001270883.1">
    <property type="nucleotide sequence ID" value="NM_001283954.1"/>
</dbReference>
<dbReference type="RefSeq" id="XP_045244216.1">
    <property type="nucleotide sequence ID" value="XM_045388281.2"/>
</dbReference>
<dbReference type="SMR" id="Q4R7Z9"/>
<dbReference type="STRING" id="9541.ENSMFAP00000025559"/>
<dbReference type="Ensembl" id="ENSMFAT00000033710.2">
    <property type="protein sequence ID" value="ENSMFAP00000025559.1"/>
    <property type="gene ID" value="ENSMFAG00000044086.2"/>
</dbReference>
<dbReference type="Ensembl" id="ENSMFAT00000084013.1">
    <property type="protein sequence ID" value="ENSMFAP00000055582.1"/>
    <property type="gene ID" value="ENSMFAG00000044086.2"/>
</dbReference>
<dbReference type="GeneID" id="101865587"/>
<dbReference type="VEuPathDB" id="HostDB:ENSMFAG00000044086"/>
<dbReference type="eggNOG" id="KOG3785">
    <property type="taxonomic scope" value="Eukaryota"/>
</dbReference>
<dbReference type="GeneTree" id="ENSGT00390000000159"/>
<dbReference type="OMA" id="FIIRRDY"/>
<dbReference type="Proteomes" id="UP000233100">
    <property type="component" value="Chromosome 3"/>
</dbReference>
<dbReference type="Bgee" id="ENSMFAG00000044086">
    <property type="expression patterns" value="Expressed in pituitary gland and 10 other cell types or tissues"/>
</dbReference>
<dbReference type="GO" id="GO:0005813">
    <property type="term" value="C:centrosome"/>
    <property type="evidence" value="ECO:0007669"/>
    <property type="project" value="Ensembl"/>
</dbReference>
<dbReference type="GO" id="GO:0036064">
    <property type="term" value="C:ciliary basal body"/>
    <property type="evidence" value="ECO:0007669"/>
    <property type="project" value="Ensembl"/>
</dbReference>
<dbReference type="GO" id="GO:0097546">
    <property type="term" value="C:ciliary base"/>
    <property type="evidence" value="ECO:0007669"/>
    <property type="project" value="TreeGrafter"/>
</dbReference>
<dbReference type="GO" id="GO:0005929">
    <property type="term" value="C:cilium"/>
    <property type="evidence" value="ECO:0000250"/>
    <property type="project" value="UniProtKB"/>
</dbReference>
<dbReference type="GO" id="GO:0030992">
    <property type="term" value="C:intraciliary transport particle B"/>
    <property type="evidence" value="ECO:0000250"/>
    <property type="project" value="UniProtKB"/>
</dbReference>
<dbReference type="GO" id="GO:0043005">
    <property type="term" value="C:neuron projection"/>
    <property type="evidence" value="ECO:0007669"/>
    <property type="project" value="Ensembl"/>
</dbReference>
<dbReference type="GO" id="GO:0120170">
    <property type="term" value="F:intraciliary transport particle B binding"/>
    <property type="evidence" value="ECO:0007669"/>
    <property type="project" value="Ensembl"/>
</dbReference>
<dbReference type="GO" id="GO:0035082">
    <property type="term" value="P:axoneme assembly"/>
    <property type="evidence" value="ECO:0000250"/>
    <property type="project" value="UniProtKB"/>
</dbReference>
<dbReference type="GO" id="GO:0060271">
    <property type="term" value="P:cilium assembly"/>
    <property type="evidence" value="ECO:0000250"/>
    <property type="project" value="UniProtKB"/>
</dbReference>
<dbReference type="GO" id="GO:0035720">
    <property type="term" value="P:intraciliary anterograde transport"/>
    <property type="evidence" value="ECO:0007669"/>
    <property type="project" value="TreeGrafter"/>
</dbReference>
<dbReference type="GO" id="GO:0042073">
    <property type="term" value="P:intraciliary transport"/>
    <property type="evidence" value="ECO:0000250"/>
    <property type="project" value="UniProtKB"/>
</dbReference>
<dbReference type="GO" id="GO:0035735">
    <property type="term" value="P:intraciliary transport involved in cilium assembly"/>
    <property type="evidence" value="ECO:0007669"/>
    <property type="project" value="TreeGrafter"/>
</dbReference>
<dbReference type="GO" id="GO:1905198">
    <property type="term" value="P:manchette assembly"/>
    <property type="evidence" value="ECO:0007669"/>
    <property type="project" value="Ensembl"/>
</dbReference>
<dbReference type="GO" id="GO:0061512">
    <property type="term" value="P:protein localization to cilium"/>
    <property type="evidence" value="ECO:0000250"/>
    <property type="project" value="UniProtKB"/>
</dbReference>
<dbReference type="GO" id="GO:0015031">
    <property type="term" value="P:protein transport"/>
    <property type="evidence" value="ECO:0007669"/>
    <property type="project" value="UniProtKB-KW"/>
</dbReference>
<dbReference type="GO" id="GO:0007224">
    <property type="term" value="P:smoothened signaling pathway"/>
    <property type="evidence" value="ECO:0000250"/>
    <property type="project" value="UniProtKB"/>
</dbReference>
<dbReference type="FunFam" id="1.25.40.10:FF:000588">
    <property type="entry name" value="Intraflagellar transport protein 56"/>
    <property type="match status" value="1"/>
</dbReference>
<dbReference type="FunFam" id="1.25.40.10:FF:000136">
    <property type="entry name" value="Tetratricopeptide repeat domain 26"/>
    <property type="match status" value="1"/>
</dbReference>
<dbReference type="FunFam" id="1.25.40.10:FF:000271">
    <property type="entry name" value="Tetratricopeptide repeat domain 26"/>
    <property type="match status" value="1"/>
</dbReference>
<dbReference type="Gene3D" id="1.25.40.10">
    <property type="entry name" value="Tetratricopeptide repeat domain"/>
    <property type="match status" value="3"/>
</dbReference>
<dbReference type="InterPro" id="IPR011990">
    <property type="entry name" value="TPR-like_helical_dom_sf"/>
</dbReference>
<dbReference type="InterPro" id="IPR019734">
    <property type="entry name" value="TPR_rpt"/>
</dbReference>
<dbReference type="InterPro" id="IPR030511">
    <property type="entry name" value="TTC26"/>
</dbReference>
<dbReference type="PANTHER" id="PTHR14781">
    <property type="entry name" value="INTRAFLAGELLAR TRANSPORT PROTEIN 56"/>
    <property type="match status" value="1"/>
</dbReference>
<dbReference type="PANTHER" id="PTHR14781:SF0">
    <property type="entry name" value="INTRAFLAGELLAR TRANSPORT PROTEIN 56"/>
    <property type="match status" value="1"/>
</dbReference>
<dbReference type="Pfam" id="PF12895">
    <property type="entry name" value="ANAPC3"/>
    <property type="match status" value="1"/>
</dbReference>
<dbReference type="SMART" id="SM00028">
    <property type="entry name" value="TPR"/>
    <property type="match status" value="5"/>
</dbReference>
<dbReference type="SUPFAM" id="SSF48452">
    <property type="entry name" value="TPR-like"/>
    <property type="match status" value="3"/>
</dbReference>
<dbReference type="PROSITE" id="PS50293">
    <property type="entry name" value="TPR_REGION"/>
    <property type="match status" value="2"/>
</dbReference>
<organism>
    <name type="scientific">Macaca fascicularis</name>
    <name type="common">Crab-eating macaque</name>
    <name type="synonym">Cynomolgus monkey</name>
    <dbReference type="NCBI Taxonomy" id="9541"/>
    <lineage>
        <taxon>Eukaryota</taxon>
        <taxon>Metazoa</taxon>
        <taxon>Chordata</taxon>
        <taxon>Craniata</taxon>
        <taxon>Vertebrata</taxon>
        <taxon>Euteleostomi</taxon>
        <taxon>Mammalia</taxon>
        <taxon>Eutheria</taxon>
        <taxon>Euarchontoglires</taxon>
        <taxon>Primates</taxon>
        <taxon>Haplorrhini</taxon>
        <taxon>Catarrhini</taxon>
        <taxon>Cercopithecidae</taxon>
        <taxon>Cercopithecinae</taxon>
        <taxon>Macaca</taxon>
    </lineage>
</organism>
<protein>
    <recommendedName>
        <fullName evidence="1">Intraflagellar transport protein 56</fullName>
    </recommendedName>
    <alternativeName>
        <fullName>Tetratricopeptide repeat protein 26</fullName>
        <shortName>TPR repeat protein 26</shortName>
    </alternativeName>
</protein>